<proteinExistence type="evidence at protein level"/>
<feature type="chain" id="PRO_0000249502" description="Centromere protein O">
    <location>
        <begin position="1"/>
        <end position="300"/>
    </location>
</feature>
<feature type="coiled-coil region" evidence="1">
    <location>
        <begin position="18"/>
        <end position="42"/>
    </location>
</feature>
<feature type="coiled-coil region" evidence="1">
    <location>
        <begin position="83"/>
        <end position="109"/>
    </location>
</feature>
<feature type="modified residue" description="Phosphoserine" evidence="10">
    <location>
        <position position="35"/>
    </location>
</feature>
<feature type="splice variant" id="VSP_020446" description="In isoform 2." evidence="8">
    <original>MEQANPLRPDGESKG</original>
    <variation>MAGILASGL</variation>
    <location>
        <begin position="1"/>
        <end position="15"/>
    </location>
</feature>
<feature type="sequence variant" id="VAR_027420" description="In dbSNP:rs1550116." evidence="2">
    <original>Q</original>
    <variation>R</variation>
    <location>
        <position position="34"/>
    </location>
</feature>
<feature type="sequence conflict" description="In Ref. 1; BAB55414." evidence="9" ref="1">
    <original>A</original>
    <variation>V</variation>
    <location>
        <position position="235"/>
    </location>
</feature>
<feature type="sequence conflict" description="In Ref. 1; BAB55414." evidence="9" ref="1">
    <original>A</original>
    <variation>V</variation>
    <location>
        <position position="269"/>
    </location>
</feature>
<feature type="helix" evidence="11">
    <location>
        <begin position="17"/>
        <end position="26"/>
    </location>
</feature>
<feature type="helix" evidence="11">
    <location>
        <begin position="90"/>
        <end position="108"/>
    </location>
</feature>
<feature type="helix" evidence="11">
    <location>
        <begin position="109"/>
        <end position="111"/>
    </location>
</feature>
<feature type="strand" evidence="11">
    <location>
        <begin position="112"/>
        <end position="117"/>
    </location>
</feature>
<feature type="strand" evidence="11">
    <location>
        <begin position="119"/>
        <end position="130"/>
    </location>
</feature>
<feature type="strand" evidence="11">
    <location>
        <begin position="133"/>
        <end position="143"/>
    </location>
</feature>
<feature type="strand" evidence="11">
    <location>
        <begin position="145"/>
        <end position="147"/>
    </location>
</feature>
<feature type="strand" evidence="11">
    <location>
        <begin position="149"/>
        <end position="153"/>
    </location>
</feature>
<feature type="strand" evidence="12">
    <location>
        <begin position="157"/>
        <end position="159"/>
    </location>
</feature>
<feature type="helix" evidence="11">
    <location>
        <begin position="161"/>
        <end position="168"/>
    </location>
</feature>
<feature type="strand" evidence="11">
    <location>
        <begin position="169"/>
        <end position="171"/>
    </location>
</feature>
<feature type="helix" evidence="11">
    <location>
        <begin position="173"/>
        <end position="199"/>
    </location>
</feature>
<feature type="strand" evidence="11">
    <location>
        <begin position="203"/>
        <end position="205"/>
    </location>
</feature>
<feature type="helix" evidence="12">
    <location>
        <begin position="213"/>
        <end position="215"/>
    </location>
</feature>
<feature type="strand" evidence="11">
    <location>
        <begin position="217"/>
        <end position="224"/>
    </location>
</feature>
<feature type="strand" evidence="12">
    <location>
        <begin position="226"/>
        <end position="228"/>
    </location>
</feature>
<feature type="strand" evidence="11">
    <location>
        <begin position="231"/>
        <end position="238"/>
    </location>
</feature>
<feature type="strand" evidence="11">
    <location>
        <begin position="248"/>
        <end position="253"/>
    </location>
</feature>
<feature type="helix" evidence="11">
    <location>
        <begin position="262"/>
        <end position="277"/>
    </location>
</feature>
<feature type="helix" evidence="11">
    <location>
        <begin position="280"/>
        <end position="287"/>
    </location>
</feature>
<feature type="helix" evidence="12">
    <location>
        <begin position="292"/>
        <end position="294"/>
    </location>
</feature>
<keyword id="KW-0002">3D-structure</keyword>
<keyword id="KW-0025">Alternative splicing</keyword>
<keyword id="KW-0137">Centromere</keyword>
<keyword id="KW-0158">Chromosome</keyword>
<keyword id="KW-0175">Coiled coil</keyword>
<keyword id="KW-0995">Kinetochore</keyword>
<keyword id="KW-0539">Nucleus</keyword>
<keyword id="KW-0597">Phosphoprotein</keyword>
<keyword id="KW-1267">Proteomics identification</keyword>
<keyword id="KW-1185">Reference proteome</keyword>
<accession>Q9BU64</accession>
<accession>B2RDC0</accession>
<accession>D6W536</accession>
<accession>Q53T55</accession>
<accession>Q96JV3</accession>
<comment type="function">
    <text evidence="4 5 6 7">Component of the CENPA-CAD (nucleosome distal) complex, a complex recruited to centromeres which is involved in assembly of kinetochore proteins, mitotic progression and chromosome segregation. May be involved in incorporation of newly synthesized CENPA into centromeres via its interaction with the CENPA-NAC complex. Modulates the kinetochore-bound levels of NDC80 complex.</text>
</comment>
<comment type="subunit">
    <text evidence="3 4">Component of the CENPA-CAD complex, composed of CENPI, CENPK, CENPL, CENPO, CENPP, CENPQ, CENPR and CENPS. The CENPA-CAD complex interacts with the CENPA-NAC complex, at least composed of CENPA, CENPC, CENPH, CENPM, CENPN, CENPT and CENPU.</text>
</comment>
<comment type="interaction">
    <interactant intactId="EBI-745954">
        <id>Q9BU64</id>
    </interactant>
    <interactant intactId="EBI-10250303">
        <id>Q6IPU0</id>
        <label>CENPP</label>
    </interactant>
    <organismsDiffer>false</organismsDiffer>
    <experiments>13</experiments>
</comment>
<comment type="interaction">
    <interactant intactId="EBI-745954">
        <id>Q9BU64</id>
    </interactant>
    <interactant intactId="EBI-743488">
        <id>Q96L14</id>
        <label>CEP170P1</label>
    </interactant>
    <organismsDiffer>false</organismsDiffer>
    <experiments>5</experiments>
</comment>
<comment type="interaction">
    <interactant intactId="EBI-745954">
        <id>Q9BU64</id>
    </interactant>
    <interactant intactId="EBI-10303987">
        <id>Q9UHG0</id>
        <label>DCDC2</label>
    </interactant>
    <organismsDiffer>false</organismsDiffer>
    <experiments>3</experiments>
</comment>
<comment type="interaction">
    <interactant intactId="EBI-745954">
        <id>Q9BU64</id>
    </interactant>
    <interactant intactId="EBI-10198738">
        <id>Q6FG41</id>
        <label>FOS</label>
    </interactant>
    <organismsDiffer>false</organismsDiffer>
    <experiments>3</experiments>
</comment>
<comment type="interaction">
    <interactant intactId="EBI-745954">
        <id>Q9BU64</id>
    </interactant>
    <interactant intactId="EBI-2806743">
        <id>P53539</id>
        <label>FOSB</label>
    </interactant>
    <organismsDiffer>false</organismsDiffer>
    <experiments>3</experiments>
</comment>
<comment type="interaction">
    <interactant intactId="EBI-745954">
        <id>Q9BU64</id>
    </interactant>
    <interactant intactId="EBI-10172876">
        <id>Q7Z6G3-2</id>
        <label>NECAB2</label>
    </interactant>
    <organismsDiffer>false</organismsDiffer>
    <experiments>3</experiments>
</comment>
<comment type="subcellular location">
    <subcellularLocation>
        <location>Nucleus</location>
    </subcellularLocation>
    <subcellularLocation>
        <location>Chromosome</location>
        <location>Centromere</location>
    </subcellularLocation>
    <subcellularLocation>
        <location>Chromosome</location>
        <location>Centromere</location>
        <location>Kinetochore</location>
    </subcellularLocation>
    <text>The CENPA-CAD complex is probably recruited on centromeres by the CENPA-NAC complex.</text>
</comment>
<comment type="alternative products">
    <event type="alternative splicing"/>
    <isoform>
        <id>Q9BU64-1</id>
        <name>1</name>
        <sequence type="displayed"/>
    </isoform>
    <isoform>
        <id>Q9BU64-2</id>
        <name>2</name>
        <sequence type="described" ref="VSP_020446"/>
    </isoform>
</comment>
<comment type="similarity">
    <text evidence="9">Belongs to the CENP-O/MCM21 family.</text>
</comment>
<reference key="1">
    <citation type="journal article" date="2004" name="Nat. Genet.">
        <title>Complete sequencing and characterization of 21,243 full-length human cDNAs.</title>
        <authorList>
            <person name="Ota T."/>
            <person name="Suzuki Y."/>
            <person name="Nishikawa T."/>
            <person name="Otsuki T."/>
            <person name="Sugiyama T."/>
            <person name="Irie R."/>
            <person name="Wakamatsu A."/>
            <person name="Hayashi K."/>
            <person name="Sato H."/>
            <person name="Nagai K."/>
            <person name="Kimura K."/>
            <person name="Makita H."/>
            <person name="Sekine M."/>
            <person name="Obayashi M."/>
            <person name="Nishi T."/>
            <person name="Shibahara T."/>
            <person name="Tanaka T."/>
            <person name="Ishii S."/>
            <person name="Yamamoto J."/>
            <person name="Saito K."/>
            <person name="Kawai Y."/>
            <person name="Isono Y."/>
            <person name="Nakamura Y."/>
            <person name="Nagahari K."/>
            <person name="Murakami K."/>
            <person name="Yasuda T."/>
            <person name="Iwayanagi T."/>
            <person name="Wagatsuma M."/>
            <person name="Shiratori A."/>
            <person name="Sudo H."/>
            <person name="Hosoiri T."/>
            <person name="Kaku Y."/>
            <person name="Kodaira H."/>
            <person name="Kondo H."/>
            <person name="Sugawara M."/>
            <person name="Takahashi M."/>
            <person name="Kanda K."/>
            <person name="Yokoi T."/>
            <person name="Furuya T."/>
            <person name="Kikkawa E."/>
            <person name="Omura Y."/>
            <person name="Abe K."/>
            <person name="Kamihara K."/>
            <person name="Katsuta N."/>
            <person name="Sato K."/>
            <person name="Tanikawa M."/>
            <person name="Yamazaki M."/>
            <person name="Ninomiya K."/>
            <person name="Ishibashi T."/>
            <person name="Yamashita H."/>
            <person name="Murakawa K."/>
            <person name="Fujimori K."/>
            <person name="Tanai H."/>
            <person name="Kimata M."/>
            <person name="Watanabe M."/>
            <person name="Hiraoka S."/>
            <person name="Chiba Y."/>
            <person name="Ishida S."/>
            <person name="Ono Y."/>
            <person name="Takiguchi S."/>
            <person name="Watanabe S."/>
            <person name="Yosida M."/>
            <person name="Hotuta T."/>
            <person name="Kusano J."/>
            <person name="Kanehori K."/>
            <person name="Takahashi-Fujii A."/>
            <person name="Hara H."/>
            <person name="Tanase T.-O."/>
            <person name="Nomura Y."/>
            <person name="Togiya S."/>
            <person name="Komai F."/>
            <person name="Hara R."/>
            <person name="Takeuchi K."/>
            <person name="Arita M."/>
            <person name="Imose N."/>
            <person name="Musashino K."/>
            <person name="Yuuki H."/>
            <person name="Oshima A."/>
            <person name="Sasaki N."/>
            <person name="Aotsuka S."/>
            <person name="Yoshikawa Y."/>
            <person name="Matsunawa H."/>
            <person name="Ichihara T."/>
            <person name="Shiohata N."/>
            <person name="Sano S."/>
            <person name="Moriya S."/>
            <person name="Momiyama H."/>
            <person name="Satoh N."/>
            <person name="Takami S."/>
            <person name="Terashima Y."/>
            <person name="Suzuki O."/>
            <person name="Nakagawa S."/>
            <person name="Senoh A."/>
            <person name="Mizoguchi H."/>
            <person name="Goto Y."/>
            <person name="Shimizu F."/>
            <person name="Wakebe H."/>
            <person name="Hishigaki H."/>
            <person name="Watanabe T."/>
            <person name="Sugiyama A."/>
            <person name="Takemoto M."/>
            <person name="Kawakami B."/>
            <person name="Yamazaki M."/>
            <person name="Watanabe K."/>
            <person name="Kumagai A."/>
            <person name="Itakura S."/>
            <person name="Fukuzumi Y."/>
            <person name="Fujimori Y."/>
            <person name="Komiyama M."/>
            <person name="Tashiro H."/>
            <person name="Tanigami A."/>
            <person name="Fujiwara T."/>
            <person name="Ono T."/>
            <person name="Yamada K."/>
            <person name="Fujii Y."/>
            <person name="Ozaki K."/>
            <person name="Hirao M."/>
            <person name="Ohmori Y."/>
            <person name="Kawabata A."/>
            <person name="Hikiji T."/>
            <person name="Kobatake N."/>
            <person name="Inagaki H."/>
            <person name="Ikema Y."/>
            <person name="Okamoto S."/>
            <person name="Okitani R."/>
            <person name="Kawakami T."/>
            <person name="Noguchi S."/>
            <person name="Itoh T."/>
            <person name="Shigeta K."/>
            <person name="Senba T."/>
            <person name="Matsumura K."/>
            <person name="Nakajima Y."/>
            <person name="Mizuno T."/>
            <person name="Morinaga M."/>
            <person name="Sasaki M."/>
            <person name="Togashi T."/>
            <person name="Oyama M."/>
            <person name="Hata H."/>
            <person name="Watanabe M."/>
            <person name="Komatsu T."/>
            <person name="Mizushima-Sugano J."/>
            <person name="Satoh T."/>
            <person name="Shirai Y."/>
            <person name="Takahashi Y."/>
            <person name="Nakagawa K."/>
            <person name="Okumura K."/>
            <person name="Nagase T."/>
            <person name="Nomura N."/>
            <person name="Kikuchi H."/>
            <person name="Masuho Y."/>
            <person name="Yamashita R."/>
            <person name="Nakai K."/>
            <person name="Yada T."/>
            <person name="Nakamura Y."/>
            <person name="Ohara O."/>
            <person name="Isogai T."/>
            <person name="Sugano S."/>
        </authorList>
    </citation>
    <scope>NUCLEOTIDE SEQUENCE [LARGE SCALE MRNA] (ISOFORMS 1 AND 2)</scope>
    <scope>VARIANT ARG-34</scope>
    <source>
        <tissue>Placenta</tissue>
    </source>
</reference>
<reference key="2">
    <citation type="journal article" date="2005" name="Nature">
        <title>Generation and annotation of the DNA sequences of human chromosomes 2 and 4.</title>
        <authorList>
            <person name="Hillier L.W."/>
            <person name="Graves T.A."/>
            <person name="Fulton R.S."/>
            <person name="Fulton L.A."/>
            <person name="Pepin K.H."/>
            <person name="Minx P."/>
            <person name="Wagner-McPherson C."/>
            <person name="Layman D."/>
            <person name="Wylie K."/>
            <person name="Sekhon M."/>
            <person name="Becker M.C."/>
            <person name="Fewell G.A."/>
            <person name="Delehaunty K.D."/>
            <person name="Miner T.L."/>
            <person name="Nash W.E."/>
            <person name="Kremitzki C."/>
            <person name="Oddy L."/>
            <person name="Du H."/>
            <person name="Sun H."/>
            <person name="Bradshaw-Cordum H."/>
            <person name="Ali J."/>
            <person name="Carter J."/>
            <person name="Cordes M."/>
            <person name="Harris A."/>
            <person name="Isak A."/>
            <person name="van Brunt A."/>
            <person name="Nguyen C."/>
            <person name="Du F."/>
            <person name="Courtney L."/>
            <person name="Kalicki J."/>
            <person name="Ozersky P."/>
            <person name="Abbott S."/>
            <person name="Armstrong J."/>
            <person name="Belter E.A."/>
            <person name="Caruso L."/>
            <person name="Cedroni M."/>
            <person name="Cotton M."/>
            <person name="Davidson T."/>
            <person name="Desai A."/>
            <person name="Elliott G."/>
            <person name="Erb T."/>
            <person name="Fronick C."/>
            <person name="Gaige T."/>
            <person name="Haakenson W."/>
            <person name="Haglund K."/>
            <person name="Holmes A."/>
            <person name="Harkins R."/>
            <person name="Kim K."/>
            <person name="Kruchowski S.S."/>
            <person name="Strong C.M."/>
            <person name="Grewal N."/>
            <person name="Goyea E."/>
            <person name="Hou S."/>
            <person name="Levy A."/>
            <person name="Martinka S."/>
            <person name="Mead K."/>
            <person name="McLellan M.D."/>
            <person name="Meyer R."/>
            <person name="Randall-Maher J."/>
            <person name="Tomlinson C."/>
            <person name="Dauphin-Kohlberg S."/>
            <person name="Kozlowicz-Reilly A."/>
            <person name="Shah N."/>
            <person name="Swearengen-Shahid S."/>
            <person name="Snider J."/>
            <person name="Strong J.T."/>
            <person name="Thompson J."/>
            <person name="Yoakum M."/>
            <person name="Leonard S."/>
            <person name="Pearman C."/>
            <person name="Trani L."/>
            <person name="Radionenko M."/>
            <person name="Waligorski J.E."/>
            <person name="Wang C."/>
            <person name="Rock S.M."/>
            <person name="Tin-Wollam A.-M."/>
            <person name="Maupin R."/>
            <person name="Latreille P."/>
            <person name="Wendl M.C."/>
            <person name="Yang S.-P."/>
            <person name="Pohl C."/>
            <person name="Wallis J.W."/>
            <person name="Spieth J."/>
            <person name="Bieri T.A."/>
            <person name="Berkowicz N."/>
            <person name="Nelson J.O."/>
            <person name="Osborne J."/>
            <person name="Ding L."/>
            <person name="Meyer R."/>
            <person name="Sabo A."/>
            <person name="Shotland Y."/>
            <person name="Sinha P."/>
            <person name="Wohldmann P.E."/>
            <person name="Cook L.L."/>
            <person name="Hickenbotham M.T."/>
            <person name="Eldred J."/>
            <person name="Williams D."/>
            <person name="Jones T.A."/>
            <person name="She X."/>
            <person name="Ciccarelli F.D."/>
            <person name="Izaurralde E."/>
            <person name="Taylor J."/>
            <person name="Schmutz J."/>
            <person name="Myers R.M."/>
            <person name="Cox D.R."/>
            <person name="Huang X."/>
            <person name="McPherson J.D."/>
            <person name="Mardis E.R."/>
            <person name="Clifton S.W."/>
            <person name="Warren W.C."/>
            <person name="Chinwalla A.T."/>
            <person name="Eddy S.R."/>
            <person name="Marra M.A."/>
            <person name="Ovcharenko I."/>
            <person name="Furey T.S."/>
            <person name="Miller W."/>
            <person name="Eichler E.E."/>
            <person name="Bork P."/>
            <person name="Suyama M."/>
            <person name="Torrents D."/>
            <person name="Waterston R.H."/>
            <person name="Wilson R.K."/>
        </authorList>
    </citation>
    <scope>NUCLEOTIDE SEQUENCE [LARGE SCALE GENOMIC DNA]</scope>
</reference>
<reference key="3">
    <citation type="submission" date="2005-09" db="EMBL/GenBank/DDBJ databases">
        <authorList>
            <person name="Mural R.J."/>
            <person name="Istrail S."/>
            <person name="Sutton G.G."/>
            <person name="Florea L."/>
            <person name="Halpern A.L."/>
            <person name="Mobarry C.M."/>
            <person name="Lippert R."/>
            <person name="Walenz B."/>
            <person name="Shatkay H."/>
            <person name="Dew I."/>
            <person name="Miller J.R."/>
            <person name="Flanigan M.J."/>
            <person name="Edwards N.J."/>
            <person name="Bolanos R."/>
            <person name="Fasulo D."/>
            <person name="Halldorsson B.V."/>
            <person name="Hannenhalli S."/>
            <person name="Turner R."/>
            <person name="Yooseph S."/>
            <person name="Lu F."/>
            <person name="Nusskern D.R."/>
            <person name="Shue B.C."/>
            <person name="Zheng X.H."/>
            <person name="Zhong F."/>
            <person name="Delcher A.L."/>
            <person name="Huson D.H."/>
            <person name="Kravitz S.A."/>
            <person name="Mouchard L."/>
            <person name="Reinert K."/>
            <person name="Remington K.A."/>
            <person name="Clark A.G."/>
            <person name="Waterman M.S."/>
            <person name="Eichler E.E."/>
            <person name="Adams M.D."/>
            <person name="Hunkapiller M.W."/>
            <person name="Myers E.W."/>
            <person name="Venter J.C."/>
        </authorList>
    </citation>
    <scope>NUCLEOTIDE SEQUENCE [LARGE SCALE GENOMIC DNA]</scope>
</reference>
<reference key="4">
    <citation type="journal article" date="2004" name="Genome Res.">
        <title>The status, quality, and expansion of the NIH full-length cDNA project: the Mammalian Gene Collection (MGC).</title>
        <authorList>
            <consortium name="The MGC Project Team"/>
        </authorList>
    </citation>
    <scope>NUCLEOTIDE SEQUENCE [LARGE SCALE MRNA] (ISOFORM 1)</scope>
    <source>
        <tissue>Lung</tissue>
    </source>
</reference>
<reference key="5">
    <citation type="journal article" date="2006" name="EMBO J.">
        <title>The human kinetochore proteins Nnf1R and Mcm21R are required for accurate chromosome segregation.</title>
        <authorList>
            <person name="McAinsh A.D."/>
            <person name="Meraldi P."/>
            <person name="Draviam V.M."/>
            <person name="Toso A."/>
            <person name="Sorger P.K."/>
        </authorList>
    </citation>
    <scope>FUNCTION</scope>
    <scope>SUBCELLULAR LOCATION</scope>
</reference>
<reference key="6">
    <citation type="journal article" date="2006" name="Genes Cells">
        <title>Comprehensive analysis of the ICEN (Interphase Centromere Complex) components enriched in the CENP-A chromatin of human cells.</title>
        <authorList>
            <person name="Izuta H."/>
            <person name="Ikeno M."/>
            <person name="Suzuki N."/>
            <person name="Tomonaga T."/>
            <person name="Nozaki N."/>
            <person name="Obuse C."/>
            <person name="Kisu Y."/>
            <person name="Goshima N."/>
            <person name="Nomura F."/>
            <person name="Nomura N."/>
            <person name="Yoda K."/>
        </authorList>
    </citation>
    <scope>FUNCTION</scope>
    <scope>SUBCELLULAR LOCATION</scope>
</reference>
<reference key="7">
    <citation type="journal article" date="2006" name="Nat. Cell Biol.">
        <title>The CENP-H-I complex is required for the efficient incorporation of newly synthesized CENP-A into centromeres.</title>
        <authorList>
            <person name="Okada M."/>
            <person name="Cheeseman I.M."/>
            <person name="Hori T."/>
            <person name="Okawa K."/>
            <person name="McLeod I.X."/>
            <person name="Yates J.R. III"/>
            <person name="Desai A."/>
            <person name="Fukagawa T."/>
        </authorList>
    </citation>
    <scope>IDENTIFICATION BY MASS SPECTROMETRY</scope>
    <scope>IDENTIFICATION IN A COMPLEX WITH CENPH; CENPI; CENPK; CENPN; CENPP; CENPQ; CENPR AND CENPU</scope>
    <scope>FUNCTION</scope>
    <scope>SUBCELLULAR LOCATION</scope>
</reference>
<reference key="8">
    <citation type="journal article" date="2006" name="Nat. Cell Biol.">
        <title>The human CENP-A centromeric nucleosome-associated complex.</title>
        <authorList>
            <person name="Foltz D.R."/>
            <person name="Jansen L.E.T."/>
            <person name="Black B.E."/>
            <person name="Bailey A.O."/>
            <person name="Yates J.R. III"/>
            <person name="Cleveland D.W."/>
        </authorList>
    </citation>
    <scope>IDENTIFICATION BY MASS SPECTROMETRY</scope>
    <scope>IDENTIFICATION IN THE CENPA-CAD COMPLEX WITH CENPI; CENPK; CENPL; CENPP; CENPQ; CENPR AND CENPS</scope>
</reference>
<reference key="9">
    <citation type="journal article" date="2007" name="EMBO J.">
        <title>The CENP-A NAC/CAD kinetochore complex controls chromosome congression and spindle bipolarity.</title>
        <authorList>
            <person name="McClelland S.E."/>
            <person name="Borusu S."/>
            <person name="Amaro A.C."/>
            <person name="Winter J.R."/>
            <person name="Belwal M."/>
            <person name="McAinsh A.D."/>
            <person name="Meraldi P."/>
        </authorList>
    </citation>
    <scope>FUNCTION</scope>
    <scope>SUBCELLULAR LOCATION</scope>
</reference>
<reference key="10">
    <citation type="journal article" date="2013" name="J. Proteome Res.">
        <title>Toward a comprehensive characterization of a human cancer cell phosphoproteome.</title>
        <authorList>
            <person name="Zhou H."/>
            <person name="Di Palma S."/>
            <person name="Preisinger C."/>
            <person name="Peng M."/>
            <person name="Polat A.N."/>
            <person name="Heck A.J."/>
            <person name="Mohammed S."/>
        </authorList>
    </citation>
    <scope>PHOSPHORYLATION [LARGE SCALE ANALYSIS] AT SER-35</scope>
    <scope>IDENTIFICATION BY MASS SPECTROMETRY [LARGE SCALE ANALYSIS]</scope>
    <source>
        <tissue>Erythroleukemia</tissue>
    </source>
</reference>
<name>CENPO_HUMAN</name>
<gene>
    <name type="primary">CENPO</name>
    <name type="synonym">ICEN36</name>
    <name type="synonym">MCM21R</name>
</gene>
<organism>
    <name type="scientific">Homo sapiens</name>
    <name type="common">Human</name>
    <dbReference type="NCBI Taxonomy" id="9606"/>
    <lineage>
        <taxon>Eukaryota</taxon>
        <taxon>Metazoa</taxon>
        <taxon>Chordata</taxon>
        <taxon>Craniata</taxon>
        <taxon>Vertebrata</taxon>
        <taxon>Euteleostomi</taxon>
        <taxon>Mammalia</taxon>
        <taxon>Eutheria</taxon>
        <taxon>Euarchontoglires</taxon>
        <taxon>Primates</taxon>
        <taxon>Haplorrhini</taxon>
        <taxon>Catarrhini</taxon>
        <taxon>Hominidae</taxon>
        <taxon>Homo</taxon>
    </lineage>
</organism>
<dbReference type="EMBL" id="AK027859">
    <property type="protein sequence ID" value="BAB55414.1"/>
    <property type="molecule type" value="mRNA"/>
</dbReference>
<dbReference type="EMBL" id="AK315483">
    <property type="protein sequence ID" value="BAG37867.1"/>
    <property type="molecule type" value="mRNA"/>
</dbReference>
<dbReference type="EMBL" id="AC012073">
    <property type="protein sequence ID" value="AAY14786.1"/>
    <property type="molecule type" value="Genomic_DNA"/>
</dbReference>
<dbReference type="EMBL" id="AC013459">
    <property type="status" value="NOT_ANNOTATED_CDS"/>
    <property type="molecule type" value="Genomic_DNA"/>
</dbReference>
<dbReference type="EMBL" id="CH471053">
    <property type="protein sequence ID" value="EAX00742.1"/>
    <property type="molecule type" value="Genomic_DNA"/>
</dbReference>
<dbReference type="EMBL" id="CH471053">
    <property type="protein sequence ID" value="EAX00743.1"/>
    <property type="molecule type" value="Genomic_DNA"/>
</dbReference>
<dbReference type="EMBL" id="BC002870">
    <property type="protein sequence ID" value="AAH02870.1"/>
    <property type="molecule type" value="mRNA"/>
</dbReference>
<dbReference type="CCDS" id="CCDS1714.1">
    <molecule id="Q9BU64-1"/>
</dbReference>
<dbReference type="CCDS" id="CCDS56113.1">
    <molecule id="Q9BU64-2"/>
</dbReference>
<dbReference type="RefSeq" id="NP_001186732.1">
    <molecule id="Q9BU64-2"/>
    <property type="nucleotide sequence ID" value="NM_001199803.3"/>
</dbReference>
<dbReference type="RefSeq" id="NP_001309030.1">
    <molecule id="Q9BU64-1"/>
    <property type="nucleotide sequence ID" value="NM_001322101.2"/>
</dbReference>
<dbReference type="RefSeq" id="NP_077298.1">
    <molecule id="Q9BU64-1"/>
    <property type="nucleotide sequence ID" value="NM_024322.4"/>
</dbReference>
<dbReference type="PDB" id="7PB8">
    <property type="method" value="X-ray"/>
    <property type="resolution" value="3.68 A"/>
    <property type="chains" value="O=1-300"/>
</dbReference>
<dbReference type="PDB" id="7PKN">
    <property type="method" value="EM"/>
    <property type="resolution" value="3.20 A"/>
    <property type="chains" value="O=1-300"/>
</dbReference>
<dbReference type="PDB" id="7QOO">
    <property type="method" value="EM"/>
    <property type="resolution" value="4.60 A"/>
    <property type="chains" value="O=1-300"/>
</dbReference>
<dbReference type="PDB" id="7R5S">
    <property type="method" value="EM"/>
    <property type="resolution" value="2.83 A"/>
    <property type="chains" value="O=1-300"/>
</dbReference>
<dbReference type="PDB" id="7R5V">
    <property type="method" value="EM"/>
    <property type="resolution" value="4.55 A"/>
    <property type="chains" value="O=1-300"/>
</dbReference>
<dbReference type="PDB" id="7XHN">
    <property type="method" value="EM"/>
    <property type="resolution" value="3.71 A"/>
    <property type="chains" value="O/o=1-300"/>
</dbReference>
<dbReference type="PDB" id="7XHO">
    <property type="method" value="EM"/>
    <property type="resolution" value="3.29 A"/>
    <property type="chains" value="O=1-300"/>
</dbReference>
<dbReference type="PDB" id="7YWX">
    <property type="method" value="EM"/>
    <property type="resolution" value="12.00 A"/>
    <property type="chains" value="O=1-300"/>
</dbReference>
<dbReference type="PDB" id="7YYH">
    <property type="method" value="EM"/>
    <property type="resolution" value="8.90 A"/>
    <property type="chains" value="O=1-300"/>
</dbReference>
<dbReference type="PDBsum" id="7PB8"/>
<dbReference type="PDBsum" id="7PKN"/>
<dbReference type="PDBsum" id="7QOO"/>
<dbReference type="PDBsum" id="7R5S"/>
<dbReference type="PDBsum" id="7R5V"/>
<dbReference type="PDBsum" id="7XHN"/>
<dbReference type="PDBsum" id="7XHO"/>
<dbReference type="PDBsum" id="7YWX"/>
<dbReference type="PDBsum" id="7YYH"/>
<dbReference type="EMDB" id="EMD-13473"/>
<dbReference type="EMDB" id="EMD-14098"/>
<dbReference type="EMDB" id="EMD-14336"/>
<dbReference type="EMDB" id="EMD-14341"/>
<dbReference type="EMDB" id="EMD-14351"/>
<dbReference type="EMDB" id="EMD-14375"/>
<dbReference type="EMDB" id="EMD-33196"/>
<dbReference type="EMDB" id="EMD-33197"/>
<dbReference type="SMR" id="Q9BU64"/>
<dbReference type="BioGRID" id="122589">
    <property type="interactions" value="50"/>
</dbReference>
<dbReference type="ComplexPortal" id="CPX-5646">
    <property type="entry name" value="Kinetochore CCAN complex"/>
</dbReference>
<dbReference type="CORUM" id="Q9BU64"/>
<dbReference type="FunCoup" id="Q9BU64">
    <property type="interactions" value="2581"/>
</dbReference>
<dbReference type="IntAct" id="Q9BU64">
    <property type="interactions" value="41"/>
</dbReference>
<dbReference type="MINT" id="Q9BU64"/>
<dbReference type="STRING" id="9606.ENSP00000370214"/>
<dbReference type="iPTMnet" id="Q9BU64"/>
<dbReference type="PhosphoSitePlus" id="Q9BU64"/>
<dbReference type="BioMuta" id="CENPO"/>
<dbReference type="DMDM" id="74733185"/>
<dbReference type="jPOST" id="Q9BU64"/>
<dbReference type="MassIVE" id="Q9BU64"/>
<dbReference type="PaxDb" id="9606-ENSP00000370214"/>
<dbReference type="PeptideAtlas" id="Q9BU64"/>
<dbReference type="ProteomicsDB" id="79055">
    <molecule id="Q9BU64-1"/>
</dbReference>
<dbReference type="ProteomicsDB" id="79056">
    <molecule id="Q9BU64-2"/>
</dbReference>
<dbReference type="Pumba" id="Q9BU64"/>
<dbReference type="Antibodypedia" id="27556">
    <property type="antibodies" value="162 antibodies from 30 providers"/>
</dbReference>
<dbReference type="DNASU" id="79172"/>
<dbReference type="Ensembl" id="ENST00000260662.2">
    <molecule id="Q9BU64-1"/>
    <property type="protein sequence ID" value="ENSP00000260662.1"/>
    <property type="gene ID" value="ENSG00000138092.11"/>
</dbReference>
<dbReference type="Ensembl" id="ENST00000380834.7">
    <molecule id="Q9BU64-1"/>
    <property type="protein sequence ID" value="ENSP00000370214.2"/>
    <property type="gene ID" value="ENSG00000138092.11"/>
</dbReference>
<dbReference type="Ensembl" id="ENST00000473706.5">
    <molecule id="Q9BU64-2"/>
    <property type="protein sequence ID" value="ENSP00000417787.1"/>
    <property type="gene ID" value="ENSG00000138092.11"/>
</dbReference>
<dbReference type="GeneID" id="79172"/>
<dbReference type="KEGG" id="hsa:79172"/>
<dbReference type="MANE-Select" id="ENST00000380834.7">
    <property type="protein sequence ID" value="ENSP00000370214.2"/>
    <property type="RefSeq nucleotide sequence ID" value="NM_001322101.2"/>
    <property type="RefSeq protein sequence ID" value="NP_001309030.1"/>
</dbReference>
<dbReference type="UCSC" id="uc002rfp.3">
    <molecule id="Q9BU64-1"/>
    <property type="organism name" value="human"/>
</dbReference>
<dbReference type="AGR" id="HGNC:28152"/>
<dbReference type="CTD" id="79172"/>
<dbReference type="DisGeNET" id="79172"/>
<dbReference type="GeneCards" id="CENPO"/>
<dbReference type="HGNC" id="HGNC:28152">
    <property type="gene designation" value="CENPO"/>
</dbReference>
<dbReference type="HPA" id="ENSG00000138092">
    <property type="expression patterns" value="Low tissue specificity"/>
</dbReference>
<dbReference type="MIM" id="611504">
    <property type="type" value="gene"/>
</dbReference>
<dbReference type="neXtProt" id="NX_Q9BU64"/>
<dbReference type="OpenTargets" id="ENSG00000138092"/>
<dbReference type="PharmGKB" id="PA145149197"/>
<dbReference type="VEuPathDB" id="HostDB:ENSG00000138092"/>
<dbReference type="eggNOG" id="ENOG502RY72">
    <property type="taxonomic scope" value="Eukaryota"/>
</dbReference>
<dbReference type="GeneTree" id="ENSGT00390000016702"/>
<dbReference type="HOGENOM" id="CLU_079531_0_0_1"/>
<dbReference type="InParanoid" id="Q9BU64"/>
<dbReference type="OMA" id="MEWANDG"/>
<dbReference type="OrthoDB" id="10050372at2759"/>
<dbReference type="PAN-GO" id="Q9BU64">
    <property type="GO annotations" value="1 GO annotation based on evolutionary models"/>
</dbReference>
<dbReference type="PhylomeDB" id="Q9BU64"/>
<dbReference type="TreeFam" id="TF335524"/>
<dbReference type="PathwayCommons" id="Q9BU64"/>
<dbReference type="Reactome" id="R-HSA-141444">
    <property type="pathway name" value="Amplification of signal from unattached kinetochores via a MAD2 inhibitory signal"/>
</dbReference>
<dbReference type="Reactome" id="R-HSA-2467813">
    <property type="pathway name" value="Separation of Sister Chromatids"/>
</dbReference>
<dbReference type="Reactome" id="R-HSA-2500257">
    <property type="pathway name" value="Resolution of Sister Chromatid Cohesion"/>
</dbReference>
<dbReference type="Reactome" id="R-HSA-5663220">
    <property type="pathway name" value="RHO GTPases Activate Formins"/>
</dbReference>
<dbReference type="Reactome" id="R-HSA-606279">
    <property type="pathway name" value="Deposition of new CENPA-containing nucleosomes at the centromere"/>
</dbReference>
<dbReference type="Reactome" id="R-HSA-68877">
    <property type="pathway name" value="Mitotic Prometaphase"/>
</dbReference>
<dbReference type="Reactome" id="R-HSA-9648025">
    <property type="pathway name" value="EML4 and NUDC in mitotic spindle formation"/>
</dbReference>
<dbReference type="SignaLink" id="Q9BU64"/>
<dbReference type="SIGNOR" id="Q9BU64"/>
<dbReference type="BioGRID-ORCS" id="79172">
    <property type="hits" value="121 hits in 1162 CRISPR screens"/>
</dbReference>
<dbReference type="ChiTaRS" id="CENPO">
    <property type="organism name" value="human"/>
</dbReference>
<dbReference type="GeneWiki" id="CENPO"/>
<dbReference type="GenomeRNAi" id="79172"/>
<dbReference type="Pharos" id="Q9BU64">
    <property type="development level" value="Tbio"/>
</dbReference>
<dbReference type="PRO" id="PR:Q9BU64"/>
<dbReference type="Proteomes" id="UP000005640">
    <property type="component" value="Chromosome 2"/>
</dbReference>
<dbReference type="RNAct" id="Q9BU64">
    <property type="molecule type" value="protein"/>
</dbReference>
<dbReference type="Bgee" id="ENSG00000138092">
    <property type="expression patterns" value="Expressed in ventricular zone and 122 other cell types or tissues"/>
</dbReference>
<dbReference type="GO" id="GO:0005829">
    <property type="term" value="C:cytosol"/>
    <property type="evidence" value="ECO:0000304"/>
    <property type="project" value="Reactome"/>
</dbReference>
<dbReference type="GO" id="GO:0000939">
    <property type="term" value="C:inner kinetochore"/>
    <property type="evidence" value="ECO:0000353"/>
    <property type="project" value="ComplexPortal"/>
</dbReference>
<dbReference type="GO" id="GO:0031511">
    <property type="term" value="C:Mis6-Sim4 complex"/>
    <property type="evidence" value="ECO:0000318"/>
    <property type="project" value="GO_Central"/>
</dbReference>
<dbReference type="GO" id="GO:0016604">
    <property type="term" value="C:nuclear body"/>
    <property type="evidence" value="ECO:0000314"/>
    <property type="project" value="HPA"/>
</dbReference>
<dbReference type="GO" id="GO:0005654">
    <property type="term" value="C:nucleoplasm"/>
    <property type="evidence" value="ECO:0000314"/>
    <property type="project" value="HPA"/>
</dbReference>
<dbReference type="GO" id="GO:0005634">
    <property type="term" value="C:nucleus"/>
    <property type="evidence" value="ECO:0000303"/>
    <property type="project" value="ComplexPortal"/>
</dbReference>
<dbReference type="GO" id="GO:0034508">
    <property type="term" value="P:centromere complex assembly"/>
    <property type="evidence" value="ECO:0007669"/>
    <property type="project" value="InterPro"/>
</dbReference>
<dbReference type="GO" id="GO:0007059">
    <property type="term" value="P:chromosome segregation"/>
    <property type="evidence" value="ECO:0000303"/>
    <property type="project" value="ComplexPortal"/>
</dbReference>
<dbReference type="CDD" id="cd23836">
    <property type="entry name" value="DRWD-C_CENP-O"/>
    <property type="match status" value="1"/>
</dbReference>
<dbReference type="CDD" id="cd23835">
    <property type="entry name" value="DRWD-N_CENP-O"/>
    <property type="match status" value="1"/>
</dbReference>
<dbReference type="InterPro" id="IPR018464">
    <property type="entry name" value="CENP-O"/>
</dbReference>
<dbReference type="PANTHER" id="PTHR14582:SF1">
    <property type="entry name" value="CENTROMERE PROTEIN O"/>
    <property type="match status" value="1"/>
</dbReference>
<dbReference type="PANTHER" id="PTHR14582">
    <property type="entry name" value="INNER KINETOCHORE SUBUNIT MAL2"/>
    <property type="match status" value="1"/>
</dbReference>
<dbReference type="Pfam" id="PF09496">
    <property type="entry name" value="CENP-O"/>
    <property type="match status" value="1"/>
</dbReference>
<sequence>MEQANPLRPDGESKGGVLAHLERLETQVSRSRKQSEELQSVQAQEGALGTKIHKLRRLRDELRAVVRHRRASVKACIANVEPNQTVEINEQEALEEKLENVKAILQAYHFTGLSGKLTSRGVCVCISTAFEGNLLDSYFVDLVIQKPLRIHHHSVPVFIPLEEIAAKYLQTNIQHFLFSLCEYLNAYSGRKYQADRLQSDFAALLTGPLQRNPLCNLLSFTYKLDPGGQSFPFCARLLYKDLTATLPTDVTVTCQGVEVLSTSWEEQRASHETLFCTKPLHQVFASFTRKGEKLDMSLVS</sequence>
<evidence type="ECO:0000255" key="1"/>
<evidence type="ECO:0000269" key="2">
    <source>
    </source>
</evidence>
<evidence type="ECO:0000269" key="3">
    <source>
    </source>
</evidence>
<evidence type="ECO:0000269" key="4">
    <source>
    </source>
</evidence>
<evidence type="ECO:0000269" key="5">
    <source>
    </source>
</evidence>
<evidence type="ECO:0000269" key="6">
    <source>
    </source>
</evidence>
<evidence type="ECO:0000269" key="7">
    <source>
    </source>
</evidence>
<evidence type="ECO:0000303" key="8">
    <source>
    </source>
</evidence>
<evidence type="ECO:0000305" key="9"/>
<evidence type="ECO:0007744" key="10">
    <source>
    </source>
</evidence>
<evidence type="ECO:0007829" key="11">
    <source>
        <dbReference type="PDB" id="7R5S"/>
    </source>
</evidence>
<evidence type="ECO:0007829" key="12">
    <source>
        <dbReference type="PDB" id="7XHO"/>
    </source>
</evidence>
<protein>
    <recommendedName>
        <fullName>Centromere protein O</fullName>
        <shortName>CENP-O</shortName>
    </recommendedName>
    <alternativeName>
        <fullName>Interphase centromere complex protein 36</fullName>
    </alternativeName>
</protein>